<evidence type="ECO:0000255" key="1">
    <source>
        <dbReference type="HAMAP-Rule" id="MF_01211"/>
    </source>
</evidence>
<reference key="1">
    <citation type="journal article" date="2001" name="Science">
        <title>Complete genome sequence of a virulent isolate of Streptococcus pneumoniae.</title>
        <authorList>
            <person name="Tettelin H."/>
            <person name="Nelson K.E."/>
            <person name="Paulsen I.T."/>
            <person name="Eisen J.A."/>
            <person name="Read T.D."/>
            <person name="Peterson S.N."/>
            <person name="Heidelberg J.F."/>
            <person name="DeBoy R.T."/>
            <person name="Haft D.H."/>
            <person name="Dodson R.J."/>
            <person name="Durkin A.S."/>
            <person name="Gwinn M.L."/>
            <person name="Kolonay J.F."/>
            <person name="Nelson W.C."/>
            <person name="Peterson J.D."/>
            <person name="Umayam L.A."/>
            <person name="White O."/>
            <person name="Salzberg S.L."/>
            <person name="Lewis M.R."/>
            <person name="Radune D."/>
            <person name="Holtzapple E.K."/>
            <person name="Khouri H.M."/>
            <person name="Wolf A.M."/>
            <person name="Utterback T.R."/>
            <person name="Hansen C.L."/>
            <person name="McDonald L.A."/>
            <person name="Feldblyum T.V."/>
            <person name="Angiuoli S.V."/>
            <person name="Dickinson T."/>
            <person name="Hickey E.K."/>
            <person name="Holt I.E."/>
            <person name="Loftus B.J."/>
            <person name="Yang F."/>
            <person name="Smith H.O."/>
            <person name="Venter J.C."/>
            <person name="Dougherty B.A."/>
            <person name="Morrison D.A."/>
            <person name="Hollingshead S.K."/>
            <person name="Fraser C.M."/>
        </authorList>
    </citation>
    <scope>NUCLEOTIDE SEQUENCE [LARGE SCALE GENOMIC DNA]</scope>
    <source>
        <strain>ATCC BAA-334 / TIGR4</strain>
    </source>
</reference>
<gene>
    <name evidence="1" type="primary">pyrK</name>
    <name type="ordered locus">SP_0963</name>
</gene>
<accession>Q97R66</accession>
<keyword id="KW-0001">2Fe-2S</keyword>
<keyword id="KW-0249">Electron transport</keyword>
<keyword id="KW-0274">FAD</keyword>
<keyword id="KW-0285">Flavoprotein</keyword>
<keyword id="KW-0408">Iron</keyword>
<keyword id="KW-0411">Iron-sulfur</keyword>
<keyword id="KW-0479">Metal-binding</keyword>
<keyword id="KW-0665">Pyrimidine biosynthesis</keyword>
<keyword id="KW-1185">Reference proteome</keyword>
<keyword id="KW-0813">Transport</keyword>
<feature type="chain" id="PRO_0000148368" description="Dihydroorotate dehydrogenase B (NAD(+)), electron transfer subunit">
    <location>
        <begin position="1"/>
        <end position="250"/>
    </location>
</feature>
<feature type="domain" description="FAD-binding FR-type" evidence="1">
    <location>
        <begin position="1"/>
        <end position="94"/>
    </location>
</feature>
<feature type="binding site" evidence="1">
    <location>
        <begin position="45"/>
        <end position="48"/>
    </location>
    <ligand>
        <name>FAD</name>
        <dbReference type="ChEBI" id="CHEBI:57692"/>
    </ligand>
</feature>
<feature type="binding site" evidence="1">
    <location>
        <begin position="62"/>
        <end position="64"/>
    </location>
    <ligand>
        <name>FAD</name>
        <dbReference type="ChEBI" id="CHEBI:57692"/>
    </ligand>
</feature>
<feature type="binding site" evidence="1">
    <location>
        <begin position="69"/>
        <end position="70"/>
    </location>
    <ligand>
        <name>FAD</name>
        <dbReference type="ChEBI" id="CHEBI:57692"/>
    </ligand>
</feature>
<feature type="binding site" evidence="1">
    <location>
        <position position="214"/>
    </location>
    <ligand>
        <name>[2Fe-2S] cluster</name>
        <dbReference type="ChEBI" id="CHEBI:190135"/>
    </ligand>
</feature>
<feature type="binding site" evidence="1">
    <location>
        <position position="219"/>
    </location>
    <ligand>
        <name>[2Fe-2S] cluster</name>
        <dbReference type="ChEBI" id="CHEBI:190135"/>
    </ligand>
</feature>
<feature type="binding site" evidence="1">
    <location>
        <position position="222"/>
    </location>
    <ligand>
        <name>[2Fe-2S] cluster</name>
        <dbReference type="ChEBI" id="CHEBI:190135"/>
    </ligand>
</feature>
<feature type="binding site" evidence="1">
    <location>
        <position position="237"/>
    </location>
    <ligand>
        <name>[2Fe-2S] cluster</name>
        <dbReference type="ChEBI" id="CHEBI:190135"/>
    </ligand>
</feature>
<dbReference type="EMBL" id="AE005672">
    <property type="protein sequence ID" value="AAK75084.1"/>
    <property type="molecule type" value="Genomic_DNA"/>
</dbReference>
<dbReference type="PIR" id="C95111">
    <property type="entry name" value="C95111"/>
</dbReference>
<dbReference type="SMR" id="Q97R66"/>
<dbReference type="PaxDb" id="170187-SP_0963"/>
<dbReference type="EnsemblBacteria" id="AAK75084">
    <property type="protein sequence ID" value="AAK75084"/>
    <property type="gene ID" value="SP_0963"/>
</dbReference>
<dbReference type="KEGG" id="spn:SP_0963"/>
<dbReference type="eggNOG" id="COG0543">
    <property type="taxonomic scope" value="Bacteria"/>
</dbReference>
<dbReference type="PhylomeDB" id="Q97R66"/>
<dbReference type="UniPathway" id="UPA00070">
    <property type="reaction ID" value="UER00945"/>
</dbReference>
<dbReference type="Proteomes" id="UP000000585">
    <property type="component" value="Chromosome"/>
</dbReference>
<dbReference type="GO" id="GO:0051537">
    <property type="term" value="F:2 iron, 2 sulfur cluster binding"/>
    <property type="evidence" value="ECO:0007669"/>
    <property type="project" value="UniProtKB-KW"/>
</dbReference>
<dbReference type="GO" id="GO:0009055">
    <property type="term" value="F:electron transfer activity"/>
    <property type="evidence" value="ECO:0007669"/>
    <property type="project" value="UniProtKB-UniRule"/>
</dbReference>
<dbReference type="GO" id="GO:0050660">
    <property type="term" value="F:flavin adenine dinucleotide binding"/>
    <property type="evidence" value="ECO:0007669"/>
    <property type="project" value="InterPro"/>
</dbReference>
<dbReference type="GO" id="GO:0046872">
    <property type="term" value="F:metal ion binding"/>
    <property type="evidence" value="ECO:0007669"/>
    <property type="project" value="UniProtKB-KW"/>
</dbReference>
<dbReference type="GO" id="GO:0016491">
    <property type="term" value="F:oxidoreductase activity"/>
    <property type="evidence" value="ECO:0007669"/>
    <property type="project" value="InterPro"/>
</dbReference>
<dbReference type="GO" id="GO:0044205">
    <property type="term" value="P:'de novo' UMP biosynthetic process"/>
    <property type="evidence" value="ECO:0007669"/>
    <property type="project" value="UniProtKB-UniRule"/>
</dbReference>
<dbReference type="CDD" id="cd06218">
    <property type="entry name" value="DHOD_e_trans"/>
    <property type="match status" value="1"/>
</dbReference>
<dbReference type="Gene3D" id="2.10.240.10">
    <property type="entry name" value="Dihydroorotate dehydrogenase, electron transfer subunit"/>
    <property type="match status" value="1"/>
</dbReference>
<dbReference type="Gene3D" id="3.40.50.80">
    <property type="entry name" value="Nucleotide-binding domain of ferredoxin-NADP reductase (FNR) module"/>
    <property type="match status" value="1"/>
</dbReference>
<dbReference type="Gene3D" id="2.40.30.10">
    <property type="entry name" value="Translation factors"/>
    <property type="match status" value="1"/>
</dbReference>
<dbReference type="HAMAP" id="MF_01211">
    <property type="entry name" value="DHODB_Fe_S_bind"/>
    <property type="match status" value="1"/>
</dbReference>
<dbReference type="InterPro" id="IPR008333">
    <property type="entry name" value="Cbr1-like_FAD-bd_dom"/>
</dbReference>
<dbReference type="InterPro" id="IPR012165">
    <property type="entry name" value="Cyt_c3_hydrogenase_gsu"/>
</dbReference>
<dbReference type="InterPro" id="IPR037117">
    <property type="entry name" value="Dihydroorotate_DH_ele_sf"/>
</dbReference>
<dbReference type="InterPro" id="IPR019480">
    <property type="entry name" value="Dihydroorotate_DH_Fe-S-bd"/>
</dbReference>
<dbReference type="InterPro" id="IPR023455">
    <property type="entry name" value="Dihydroorotate_DHASE_ETsu"/>
</dbReference>
<dbReference type="InterPro" id="IPR017927">
    <property type="entry name" value="FAD-bd_FR_type"/>
</dbReference>
<dbReference type="InterPro" id="IPR039261">
    <property type="entry name" value="FNR_nucleotide-bd"/>
</dbReference>
<dbReference type="InterPro" id="IPR001433">
    <property type="entry name" value="OxRdtase_FAD/NAD-bd"/>
</dbReference>
<dbReference type="InterPro" id="IPR050353">
    <property type="entry name" value="PyrK_electron_transfer"/>
</dbReference>
<dbReference type="InterPro" id="IPR017938">
    <property type="entry name" value="Riboflavin_synthase-like_b-brl"/>
</dbReference>
<dbReference type="NCBIfam" id="NF000797">
    <property type="entry name" value="PRK00054.1-2"/>
    <property type="match status" value="1"/>
</dbReference>
<dbReference type="PANTHER" id="PTHR43513">
    <property type="entry name" value="DIHYDROOROTATE DEHYDROGENASE B (NAD(+)), ELECTRON TRANSFER SUBUNIT"/>
    <property type="match status" value="1"/>
</dbReference>
<dbReference type="PANTHER" id="PTHR43513:SF3">
    <property type="entry name" value="DIHYDROOROTATE DEHYDROGENASE B (NAD(+)), ELECTRON TRANSFER SUBUNIT-RELATED"/>
    <property type="match status" value="1"/>
</dbReference>
<dbReference type="Pfam" id="PF10418">
    <property type="entry name" value="DHODB_Fe-S_bind"/>
    <property type="match status" value="1"/>
</dbReference>
<dbReference type="Pfam" id="PF00970">
    <property type="entry name" value="FAD_binding_6"/>
    <property type="match status" value="1"/>
</dbReference>
<dbReference type="Pfam" id="PF00175">
    <property type="entry name" value="NAD_binding_1"/>
    <property type="match status" value="1"/>
</dbReference>
<dbReference type="PIRSF" id="PIRSF006816">
    <property type="entry name" value="Cyc3_hyd_g"/>
    <property type="match status" value="1"/>
</dbReference>
<dbReference type="PRINTS" id="PR00409">
    <property type="entry name" value="PHDIOXRDTASE"/>
</dbReference>
<dbReference type="SUPFAM" id="SSF52343">
    <property type="entry name" value="Ferredoxin reductase-like, C-terminal NADP-linked domain"/>
    <property type="match status" value="1"/>
</dbReference>
<dbReference type="SUPFAM" id="SSF63380">
    <property type="entry name" value="Riboflavin synthase domain-like"/>
    <property type="match status" value="1"/>
</dbReference>
<dbReference type="PROSITE" id="PS51384">
    <property type="entry name" value="FAD_FR"/>
    <property type="match status" value="1"/>
</dbReference>
<sequence>MKVVAQEEIAPAIFELVLEGEMVEAMRAGQFLHLRVPDDAHLLRRPISISSIDKANKQCHLIYRIDGAGTAIFSTLSQGDTLDVMGPQGNGFDLSDLDEQNQVLLVGGGIGVPPLLEVAKELHERGVKVVTVLGFANKDAVILKTELAQYGQVFVTTDDGSYGIKGNVSVVINDLDSQFDAVYSCGAPGMMKYINQTFDDHPRAYLSLESRMACGMGACYACVLKVPENETVSQRVCEDGPVFRTGTVVL</sequence>
<protein>
    <recommendedName>
        <fullName evidence="1">Dihydroorotate dehydrogenase B (NAD(+)), electron transfer subunit</fullName>
    </recommendedName>
    <alternativeName>
        <fullName evidence="1">Dihydroorotate oxidase B, electron transfer subunit</fullName>
    </alternativeName>
</protein>
<proteinExistence type="inferred from homology"/>
<name>PYRK_STRPN</name>
<organism>
    <name type="scientific">Streptococcus pneumoniae serotype 4 (strain ATCC BAA-334 / TIGR4)</name>
    <dbReference type="NCBI Taxonomy" id="170187"/>
    <lineage>
        <taxon>Bacteria</taxon>
        <taxon>Bacillati</taxon>
        <taxon>Bacillota</taxon>
        <taxon>Bacilli</taxon>
        <taxon>Lactobacillales</taxon>
        <taxon>Streptococcaceae</taxon>
        <taxon>Streptococcus</taxon>
    </lineage>
</organism>
<comment type="function">
    <text evidence="1">Responsible for channeling the electrons from the oxidation of dihydroorotate from the FMN redox center in the PyrD type B subunit to the ultimate electron acceptor NAD(+).</text>
</comment>
<comment type="cofactor">
    <cofactor evidence="1">
        <name>[2Fe-2S] cluster</name>
        <dbReference type="ChEBI" id="CHEBI:190135"/>
    </cofactor>
    <text evidence="1">Binds 1 [2Fe-2S] cluster per subunit.</text>
</comment>
<comment type="cofactor">
    <cofactor evidence="1">
        <name>FAD</name>
        <dbReference type="ChEBI" id="CHEBI:57692"/>
    </cofactor>
    <text evidence="1">Binds 1 FAD per subunit.</text>
</comment>
<comment type="pathway">
    <text evidence="1">Pyrimidine metabolism; UMP biosynthesis via de novo pathway; orotate from (S)-dihydroorotate (NAD(+) route): step 1/1.</text>
</comment>
<comment type="subunit">
    <text evidence="1">Heterotetramer of 2 PyrK and 2 PyrD type B subunits.</text>
</comment>
<comment type="similarity">
    <text evidence="1">Belongs to the PyrK family.</text>
</comment>